<name>NIMI3_ARATH</name>
<gene>
    <name evidence="5" type="primary">NIMIN-3</name>
    <name evidence="6" type="ordered locus">At1g09415</name>
    <name evidence="7" type="ORF">F14J9</name>
</gene>
<protein>
    <recommendedName>
        <fullName evidence="5">Protein NIM1-INTERACTING 3</fullName>
        <shortName evidence="5">Protein NIMIN-3</shortName>
    </recommendedName>
</protein>
<comment type="subunit">
    <text evidence="3 4">Interacts with NPR1 C-terminal region.</text>
</comment>
<comment type="interaction">
    <interactant intactId="EBI-541115">
        <id>Q9FNZ4</id>
    </interactant>
    <interactant intactId="EBI-15392261">
        <id>Q8RV83</id>
        <label>ARF70</label>
    </interactant>
    <organismsDiffer>false</organismsDiffer>
    <experiments>4</experiments>
</comment>
<comment type="interaction">
    <interactant intactId="EBI-541115">
        <id>Q9FNZ4</id>
    </interactant>
    <interactant intactId="EBI-15203988">
        <id>Q9LS00</id>
        <label>HHO1</label>
    </interactant>
    <organismsDiffer>false</organismsDiffer>
    <experiments>3</experiments>
</comment>
<comment type="interaction">
    <interactant intactId="EBI-541115">
        <id>Q9FNZ4</id>
    </interactant>
    <interactant intactId="EBI-4429217">
        <id>Q8VZS3</id>
        <label>HHO2</label>
    </interactant>
    <organismsDiffer>false</organismsDiffer>
    <experiments>3</experiments>
</comment>
<comment type="interaction">
    <interactant intactId="EBI-541115">
        <id>Q9FNZ4</id>
    </interactant>
    <interactant intactId="EBI-2298866">
        <id>Q9FPE8</id>
        <label>HHO3</label>
    </interactant>
    <organismsDiffer>false</organismsDiffer>
    <experiments>3</experiments>
</comment>
<comment type="interaction">
    <interactant intactId="EBI-541115">
        <id>Q9FNZ4</id>
    </interactant>
    <interactant intactId="EBI-15198743">
        <id>Q9LSI4</id>
        <label>MGH6.1</label>
    </interactant>
    <organismsDiffer>false</organismsDiffer>
    <experiments>3</experiments>
</comment>
<comment type="interaction">
    <interactant intactId="EBI-541115">
        <id>Q9FNZ4</id>
    </interactant>
    <interactant intactId="EBI-25523464">
        <id>Q9FK47</id>
        <label>MYR1</label>
    </interactant>
    <organismsDiffer>false</organismsDiffer>
    <experiments>3</experiments>
</comment>
<comment type="interaction">
    <interactant intactId="EBI-541115">
        <id>Q9FNZ4</id>
    </interactant>
    <interactant intactId="EBI-4444640">
        <id>Q84JP1</id>
        <label>NFYA7</label>
    </interactant>
    <organismsDiffer>false</organismsDiffer>
    <experiments>3</experiments>
</comment>
<comment type="interaction">
    <interactant intactId="EBI-541115">
        <id>Q9FNZ4</id>
    </interactant>
    <interactant intactId="EBI-1392127">
        <id>P93002</id>
        <label>NPR1</label>
    </interactant>
    <organismsDiffer>false</organismsDiffer>
    <experiments>5</experiments>
</comment>
<comment type="interaction">
    <interactant intactId="EBI-541115">
        <id>Q9FNZ4</id>
    </interactant>
    <interactant intactId="EBI-541093">
        <id>Q8L9W4</id>
        <label>NPR1</label>
    </interactant>
    <organismsDiffer>false</organismsDiffer>
    <experiments>3</experiments>
</comment>
<comment type="interaction">
    <interactant intactId="EBI-541115">
        <id>Q9FNZ4</id>
    </interactant>
    <interactant intactId="EBI-4441365">
        <id>Q8L746</id>
        <label>NPR3</label>
    </interactant>
    <organismsDiffer>false</organismsDiffer>
    <experiments>3</experiments>
</comment>
<comment type="interaction">
    <interactant intactId="EBI-541115">
        <id>Q9FNZ4</id>
    </interactant>
    <interactant intactId="EBI-4443730">
        <id>Q8LAJ7</id>
        <label>PHL3</label>
    </interactant>
    <organismsDiffer>false</organismsDiffer>
    <experiments>3</experiments>
</comment>
<comment type="interaction">
    <interactant intactId="EBI-541115">
        <id>Q9FNZ4</id>
    </interactant>
    <interactant intactId="EBI-4424877">
        <id>Q9S7W5</id>
        <label>TCP13</label>
    </interactant>
    <organismsDiffer>false</organismsDiffer>
    <experiments>3</experiments>
</comment>
<comment type="interaction">
    <interactant intactId="EBI-541115">
        <id>Q9FNZ4</id>
    </interactant>
    <interactant intactId="EBI-4426144">
        <id>Q9C9L2</id>
        <label>TCP15</label>
    </interactant>
    <organismsDiffer>false</organismsDiffer>
    <experiments>3</experiments>
</comment>
<comment type="interaction">
    <interactant intactId="EBI-541115">
        <id>Q9FNZ4</id>
    </interactant>
    <interactant intactId="EBI-15198627">
        <id>Q9M1U4</id>
        <label>TCP16</label>
    </interactant>
    <organismsDiffer>false</organismsDiffer>
    <experiments>3</experiments>
</comment>
<comment type="interaction">
    <interactant intactId="EBI-541115">
        <id>Q9FNZ4</id>
    </interactant>
    <interactant intactId="EBI-4426168">
        <id>Q9FTA2</id>
        <label>TCP21</label>
    </interactant>
    <organismsDiffer>false</organismsDiffer>
    <experiments>3</experiments>
</comment>
<comment type="interaction">
    <interactant intactId="EBI-541115">
        <id>Q9FNZ4</id>
    </interactant>
    <interactant intactId="EBI-25522447">
        <id>Q9MAH8</id>
        <label>TCP3</label>
    </interactant>
    <organismsDiffer>false</organismsDiffer>
    <experiments>3</experiments>
</comment>
<comment type="interaction">
    <interactant intactId="EBI-541115">
        <id>Q9FNZ4</id>
    </interactant>
    <interactant intactId="EBI-1806701">
        <id>Q9LQW3</id>
        <label>ZHD14</label>
    </interactant>
    <organismsDiffer>false</organismsDiffer>
    <experiments>3</experiments>
</comment>
<comment type="subcellular location">
    <subcellularLocation>
        <location evidence="3">Nucleus</location>
    </subcellularLocation>
</comment>
<comment type="induction">
    <text evidence="3">By salicylic acid (SA) and BTH.</text>
</comment>
<comment type="similarity">
    <text>Belongs to the NPR1-interactor family.</text>
</comment>
<accession>Q9FNZ4</accession>
<reference key="1">
    <citation type="journal article" date="2001" name="Plant Mol. Biol.">
        <title>NIMIN-1, NIMIN-2 and NIMIN-3, members of a novel family of proteins from Arabidopsis that interact with NPR1/NIM1, a key regulator of systemic acquired resistance in plants.</title>
        <authorList>
            <person name="Weigel R.R."/>
            <person name="Baeuscher C."/>
            <person name="Pfitzner A.J.P."/>
            <person name="Pfitzner U.M."/>
        </authorList>
    </citation>
    <scope>NUCLEOTIDE SEQUENCE [MRNA]</scope>
    <scope>INTERACTION WITH NPR1</scope>
    <scope>INDUCTION</scope>
    <scope>SUBCELLULAR LOCATION</scope>
    <source>
        <strain>cv. Columbia</strain>
    </source>
</reference>
<reference key="2">
    <citation type="journal article" date="2000" name="Nature">
        <title>Sequence and analysis of chromosome 1 of the plant Arabidopsis thaliana.</title>
        <authorList>
            <person name="Theologis A."/>
            <person name="Ecker J.R."/>
            <person name="Palm C.J."/>
            <person name="Federspiel N.A."/>
            <person name="Kaul S."/>
            <person name="White O."/>
            <person name="Alonso J."/>
            <person name="Altafi H."/>
            <person name="Araujo R."/>
            <person name="Bowman C.L."/>
            <person name="Brooks S.Y."/>
            <person name="Buehler E."/>
            <person name="Chan A."/>
            <person name="Chao Q."/>
            <person name="Chen H."/>
            <person name="Cheuk R.F."/>
            <person name="Chin C.W."/>
            <person name="Chung M.K."/>
            <person name="Conn L."/>
            <person name="Conway A.B."/>
            <person name="Conway A.R."/>
            <person name="Creasy T.H."/>
            <person name="Dewar K."/>
            <person name="Dunn P."/>
            <person name="Etgu P."/>
            <person name="Feldblyum T.V."/>
            <person name="Feng J.-D."/>
            <person name="Fong B."/>
            <person name="Fujii C.Y."/>
            <person name="Gill J.E."/>
            <person name="Goldsmith A.D."/>
            <person name="Haas B."/>
            <person name="Hansen N.F."/>
            <person name="Hughes B."/>
            <person name="Huizar L."/>
            <person name="Hunter J.L."/>
            <person name="Jenkins J."/>
            <person name="Johnson-Hopson C."/>
            <person name="Khan S."/>
            <person name="Khaykin E."/>
            <person name="Kim C.J."/>
            <person name="Koo H.L."/>
            <person name="Kremenetskaia I."/>
            <person name="Kurtz D.B."/>
            <person name="Kwan A."/>
            <person name="Lam B."/>
            <person name="Langin-Hooper S."/>
            <person name="Lee A."/>
            <person name="Lee J.M."/>
            <person name="Lenz C.A."/>
            <person name="Li J.H."/>
            <person name="Li Y.-P."/>
            <person name="Lin X."/>
            <person name="Liu S.X."/>
            <person name="Liu Z.A."/>
            <person name="Luros J.S."/>
            <person name="Maiti R."/>
            <person name="Marziali A."/>
            <person name="Militscher J."/>
            <person name="Miranda M."/>
            <person name="Nguyen M."/>
            <person name="Nierman W.C."/>
            <person name="Osborne B.I."/>
            <person name="Pai G."/>
            <person name="Peterson J."/>
            <person name="Pham P.K."/>
            <person name="Rizzo M."/>
            <person name="Rooney T."/>
            <person name="Rowley D."/>
            <person name="Sakano H."/>
            <person name="Salzberg S.L."/>
            <person name="Schwartz J.R."/>
            <person name="Shinn P."/>
            <person name="Southwick A.M."/>
            <person name="Sun H."/>
            <person name="Tallon L.J."/>
            <person name="Tambunga G."/>
            <person name="Toriumi M.J."/>
            <person name="Town C.D."/>
            <person name="Utterback T."/>
            <person name="Van Aken S."/>
            <person name="Vaysberg M."/>
            <person name="Vysotskaia V.S."/>
            <person name="Walker M."/>
            <person name="Wu D."/>
            <person name="Yu G."/>
            <person name="Fraser C.M."/>
            <person name="Venter J.C."/>
            <person name="Davis R.W."/>
        </authorList>
    </citation>
    <scope>NUCLEOTIDE SEQUENCE [LARGE SCALE GENOMIC DNA]</scope>
    <source>
        <strain>cv. Columbia</strain>
    </source>
</reference>
<reference key="3">
    <citation type="journal article" date="2017" name="Plant J.">
        <title>Araport11: a complete reannotation of the Arabidopsis thaliana reference genome.</title>
        <authorList>
            <person name="Cheng C.Y."/>
            <person name="Krishnakumar V."/>
            <person name="Chan A.P."/>
            <person name="Thibaud-Nissen F."/>
            <person name="Schobel S."/>
            <person name="Town C.D."/>
        </authorList>
    </citation>
    <scope>GENOME REANNOTATION</scope>
    <source>
        <strain>cv. Columbia</strain>
    </source>
</reference>
<reference key="4">
    <citation type="journal article" date="2003" name="Science">
        <title>Empirical analysis of transcriptional activity in the Arabidopsis genome.</title>
        <authorList>
            <person name="Yamada K."/>
            <person name="Lim J."/>
            <person name="Dale J.M."/>
            <person name="Chen H."/>
            <person name="Shinn P."/>
            <person name="Palm C.J."/>
            <person name="Southwick A.M."/>
            <person name="Wu H.C."/>
            <person name="Kim C.J."/>
            <person name="Nguyen M."/>
            <person name="Pham P.K."/>
            <person name="Cheuk R.F."/>
            <person name="Karlin-Newmann G."/>
            <person name="Liu S.X."/>
            <person name="Lam B."/>
            <person name="Sakano H."/>
            <person name="Wu T."/>
            <person name="Yu G."/>
            <person name="Miranda M."/>
            <person name="Quach H.L."/>
            <person name="Tripp M."/>
            <person name="Chang C.H."/>
            <person name="Lee J.M."/>
            <person name="Toriumi M.J."/>
            <person name="Chan M.M."/>
            <person name="Tang C.C."/>
            <person name="Onodera C.S."/>
            <person name="Deng J.M."/>
            <person name="Akiyama K."/>
            <person name="Ansari Y."/>
            <person name="Arakawa T."/>
            <person name="Banh J."/>
            <person name="Banno F."/>
            <person name="Bowser L."/>
            <person name="Brooks S.Y."/>
            <person name="Carninci P."/>
            <person name="Chao Q."/>
            <person name="Choy N."/>
            <person name="Enju A."/>
            <person name="Goldsmith A.D."/>
            <person name="Gurjal M."/>
            <person name="Hansen N.F."/>
            <person name="Hayashizaki Y."/>
            <person name="Johnson-Hopson C."/>
            <person name="Hsuan V.W."/>
            <person name="Iida K."/>
            <person name="Karnes M."/>
            <person name="Khan S."/>
            <person name="Koesema E."/>
            <person name="Ishida J."/>
            <person name="Jiang P.X."/>
            <person name="Jones T."/>
            <person name="Kawai J."/>
            <person name="Kamiya A."/>
            <person name="Meyers C."/>
            <person name="Nakajima M."/>
            <person name="Narusaka M."/>
            <person name="Seki M."/>
            <person name="Sakurai T."/>
            <person name="Satou M."/>
            <person name="Tamse R."/>
            <person name="Vaysberg M."/>
            <person name="Wallender E.K."/>
            <person name="Wong C."/>
            <person name="Yamamura Y."/>
            <person name="Yuan S."/>
            <person name="Shinozaki K."/>
            <person name="Davis R.W."/>
            <person name="Theologis A."/>
            <person name="Ecker J.R."/>
        </authorList>
    </citation>
    <scope>NUCLEOTIDE SEQUENCE [LARGE SCALE MRNA]</scope>
    <source>
        <strain>cv. Columbia</strain>
    </source>
</reference>
<reference key="5">
    <citation type="submission" date="2004-09" db="EMBL/GenBank/DDBJ databases">
        <title>Large-scale analysis of RIKEN Arabidopsis full-length (RAFL) cDNAs.</title>
        <authorList>
            <person name="Totoki Y."/>
            <person name="Seki M."/>
            <person name="Ishida J."/>
            <person name="Nakajima M."/>
            <person name="Enju A."/>
            <person name="Kamiya A."/>
            <person name="Narusaka M."/>
            <person name="Shin-i T."/>
            <person name="Nakagawa M."/>
            <person name="Sakamoto N."/>
            <person name="Oishi K."/>
            <person name="Kohara Y."/>
            <person name="Kobayashi M."/>
            <person name="Toyoda A."/>
            <person name="Sakaki Y."/>
            <person name="Sakurai T."/>
            <person name="Iida K."/>
            <person name="Akiyama K."/>
            <person name="Satou M."/>
            <person name="Toyoda T."/>
            <person name="Konagaya A."/>
            <person name="Carninci P."/>
            <person name="Kawai J."/>
            <person name="Hayashizaki Y."/>
            <person name="Shinozaki K."/>
        </authorList>
    </citation>
    <scope>NUCLEOTIDE SEQUENCE [LARGE SCALE MRNA]</scope>
    <source>
        <strain>cv. Columbia</strain>
    </source>
</reference>
<reference key="6">
    <citation type="journal article" date="2015" name="Cell Host Microbe">
        <title>Posttranslational modifications of the master transcriptional regulator NPR1 enable dynamic but tight control of plant immune responses.</title>
        <authorList>
            <person name="Saleh A."/>
            <person name="Withers J."/>
            <person name="Mohan R."/>
            <person name="Marques J."/>
            <person name="Gu Y."/>
            <person name="Yan S."/>
            <person name="Zavaliev R."/>
            <person name="Nomoto M."/>
            <person name="Tada Y."/>
            <person name="Dong X."/>
        </authorList>
    </citation>
    <scope>INTERACTION WITH NPR1</scope>
    <source>
        <strain>cv. Columbia</strain>
    </source>
</reference>
<evidence type="ECO:0000255" key="1"/>
<evidence type="ECO:0000256" key="2">
    <source>
        <dbReference type="SAM" id="MobiDB-lite"/>
    </source>
</evidence>
<evidence type="ECO:0000269" key="3">
    <source>
    </source>
</evidence>
<evidence type="ECO:0000269" key="4">
    <source>
    </source>
</evidence>
<evidence type="ECO:0000303" key="5">
    <source>
    </source>
</evidence>
<evidence type="ECO:0000312" key="6">
    <source>
        <dbReference type="Araport" id="AT1G09415"/>
    </source>
</evidence>
<evidence type="ECO:0000312" key="7">
    <source>
        <dbReference type="EMBL" id="AC003970"/>
    </source>
</evidence>
<feature type="chain" id="PRO_0000407998" description="Protein NIM1-INTERACTING 3">
    <location>
        <begin position="1"/>
        <end position="112"/>
    </location>
</feature>
<feature type="region of interest" description="Disordered" evidence="2">
    <location>
        <begin position="1"/>
        <end position="20"/>
    </location>
</feature>
<feature type="region of interest" description="Disordered" evidence="2">
    <location>
        <begin position="77"/>
        <end position="112"/>
    </location>
</feature>
<feature type="coiled-coil region" evidence="1">
    <location>
        <begin position="1"/>
        <end position="35"/>
    </location>
</feature>
<feature type="coiled-coil region" evidence="1">
    <location>
        <begin position="69"/>
        <end position="96"/>
    </location>
</feature>
<feature type="compositionally biased region" description="Low complexity" evidence="2">
    <location>
        <begin position="77"/>
        <end position="89"/>
    </location>
</feature>
<dbReference type="EMBL" id="AJ250186">
    <property type="protein sequence ID" value="CAC19846.1"/>
    <property type="molecule type" value="mRNA"/>
</dbReference>
<dbReference type="EMBL" id="AC003970">
    <property type="status" value="NOT_ANNOTATED_CDS"/>
    <property type="molecule type" value="Genomic_DNA"/>
</dbReference>
<dbReference type="EMBL" id="CP002684">
    <property type="protein sequence ID" value="AEE28439.1"/>
    <property type="molecule type" value="Genomic_DNA"/>
</dbReference>
<dbReference type="EMBL" id="AF386947">
    <property type="protein sequence ID" value="AAK62392.1"/>
    <property type="molecule type" value="mRNA"/>
</dbReference>
<dbReference type="EMBL" id="AY072486">
    <property type="protein sequence ID" value="AAL66901.1"/>
    <property type="molecule type" value="mRNA"/>
</dbReference>
<dbReference type="EMBL" id="AK175919">
    <property type="protein sequence ID" value="BAD43682.1"/>
    <property type="molecule type" value="mRNA"/>
</dbReference>
<dbReference type="RefSeq" id="NP_563843.1">
    <property type="nucleotide sequence ID" value="NM_100812.3"/>
</dbReference>
<dbReference type="BioGRID" id="22705">
    <property type="interactions" value="18"/>
</dbReference>
<dbReference type="FunCoup" id="Q9FNZ4">
    <property type="interactions" value="19"/>
</dbReference>
<dbReference type="IntAct" id="Q9FNZ4">
    <property type="interactions" value="19"/>
</dbReference>
<dbReference type="STRING" id="3702.Q9FNZ4"/>
<dbReference type="PaxDb" id="3702-AT1G09415.1"/>
<dbReference type="ProteomicsDB" id="250513"/>
<dbReference type="EnsemblPlants" id="AT1G09415.1">
    <property type="protein sequence ID" value="AT1G09415.1"/>
    <property type="gene ID" value="AT1G09415"/>
</dbReference>
<dbReference type="GeneID" id="837464"/>
<dbReference type="Gramene" id="AT1G09415.1">
    <property type="protein sequence ID" value="AT1G09415.1"/>
    <property type="gene ID" value="AT1G09415"/>
</dbReference>
<dbReference type="KEGG" id="ath:AT1G09415"/>
<dbReference type="Araport" id="AT1G09415"/>
<dbReference type="TAIR" id="AT1G09415">
    <property type="gene designation" value="NIMIN-3"/>
</dbReference>
<dbReference type="eggNOG" id="ENOG502SACN">
    <property type="taxonomic scope" value="Eukaryota"/>
</dbReference>
<dbReference type="HOGENOM" id="CLU_2177467_0_0_1"/>
<dbReference type="InParanoid" id="Q9FNZ4"/>
<dbReference type="OMA" id="AWNPAFQ"/>
<dbReference type="PRO" id="PR:Q9FNZ4"/>
<dbReference type="Proteomes" id="UP000006548">
    <property type="component" value="Chromosome 1"/>
</dbReference>
<dbReference type="ExpressionAtlas" id="Q9FNZ4">
    <property type="expression patterns" value="baseline and differential"/>
</dbReference>
<dbReference type="GO" id="GO:0005634">
    <property type="term" value="C:nucleus"/>
    <property type="evidence" value="ECO:0007669"/>
    <property type="project" value="UniProtKB-SubCell"/>
</dbReference>
<dbReference type="GO" id="GO:0010112">
    <property type="term" value="P:regulation of systemic acquired resistance"/>
    <property type="evidence" value="ECO:0007669"/>
    <property type="project" value="InterPro"/>
</dbReference>
<dbReference type="InterPro" id="IPR031425">
    <property type="entry name" value="NPR1/NH1-interacting"/>
</dbReference>
<dbReference type="PANTHER" id="PTHR33669">
    <property type="entry name" value="PROTEIN NEGATIVE REGULATOR OF RESISTANCE"/>
    <property type="match status" value="1"/>
</dbReference>
<dbReference type="PANTHER" id="PTHR33669:SF26">
    <property type="entry name" value="PROTEIN NIM1-INTERACTING 3"/>
    <property type="match status" value="1"/>
</dbReference>
<dbReference type="Pfam" id="PF15699">
    <property type="entry name" value="NPR1_interact"/>
    <property type="match status" value="1"/>
</dbReference>
<organism>
    <name type="scientific">Arabidopsis thaliana</name>
    <name type="common">Mouse-ear cress</name>
    <dbReference type="NCBI Taxonomy" id="3702"/>
    <lineage>
        <taxon>Eukaryota</taxon>
        <taxon>Viridiplantae</taxon>
        <taxon>Streptophyta</taxon>
        <taxon>Embryophyta</taxon>
        <taxon>Tracheophyta</taxon>
        <taxon>Spermatophyta</taxon>
        <taxon>Magnoliopsida</taxon>
        <taxon>eudicotyledons</taxon>
        <taxon>Gunneridae</taxon>
        <taxon>Pentapetalae</taxon>
        <taxon>rosids</taxon>
        <taxon>malvids</taxon>
        <taxon>Brassicales</taxon>
        <taxon>Brassicaceae</taxon>
        <taxon>Camelineae</taxon>
        <taxon>Arabidopsis</taxon>
    </lineage>
</organism>
<keyword id="KW-0175">Coiled coil</keyword>
<keyword id="KW-0539">Nucleus</keyword>
<keyword id="KW-1185">Reference proteome</keyword>
<sequence length="112" mass="13294">MDRDRKRVKMEKEDDEEEKMEKLYTVLKNAREMRKYVNSSMEKKRQEEEERARVRRFPSFQPEDFIFMNKAEANNIEKAANESSSASNEYDGSKEKQEGSETNVCLDLNLSL</sequence>
<proteinExistence type="evidence at protein level"/>